<reference key="1">
    <citation type="submission" date="2003-10" db="EMBL/GenBank/DDBJ databases">
        <title>The complete genome sequence of the alkaliphilic Bacillus clausii KSM-K16.</title>
        <authorList>
            <person name="Takaki Y."/>
            <person name="Kageyama Y."/>
            <person name="Shimamura S."/>
            <person name="Suzuki H."/>
            <person name="Nishi S."/>
            <person name="Hatada Y."/>
            <person name="Kawai S."/>
            <person name="Ito S."/>
            <person name="Horikoshi K."/>
        </authorList>
    </citation>
    <scope>NUCLEOTIDE SEQUENCE [LARGE SCALE GENOMIC DNA]</scope>
    <source>
        <strain>KSM-K16</strain>
    </source>
</reference>
<protein>
    <recommendedName>
        <fullName evidence="1">Aspartyl/glutamyl-tRNA(Asn/Gln) amidotransferase subunit B</fullName>
        <shortName evidence="1">Asp/Glu-ADT subunit B</shortName>
        <ecNumber evidence="1">6.3.5.-</ecNumber>
    </recommendedName>
</protein>
<accession>Q5WJ19</accession>
<dbReference type="EC" id="6.3.5.-" evidence="1"/>
<dbReference type="EMBL" id="AP006627">
    <property type="protein sequence ID" value="BAD63636.1"/>
    <property type="molecule type" value="Genomic_DNA"/>
</dbReference>
<dbReference type="RefSeq" id="WP_011245951.1">
    <property type="nucleotide sequence ID" value="NC_006582.1"/>
</dbReference>
<dbReference type="SMR" id="Q5WJ19"/>
<dbReference type="STRING" id="66692.ABC1098"/>
<dbReference type="KEGG" id="bcl:ABC1098"/>
<dbReference type="eggNOG" id="COG0064">
    <property type="taxonomic scope" value="Bacteria"/>
</dbReference>
<dbReference type="HOGENOM" id="CLU_019240_0_0_9"/>
<dbReference type="OrthoDB" id="9804078at2"/>
<dbReference type="Proteomes" id="UP000001168">
    <property type="component" value="Chromosome"/>
</dbReference>
<dbReference type="GO" id="GO:0050566">
    <property type="term" value="F:asparaginyl-tRNA synthase (glutamine-hydrolyzing) activity"/>
    <property type="evidence" value="ECO:0007669"/>
    <property type="project" value="RHEA"/>
</dbReference>
<dbReference type="GO" id="GO:0005524">
    <property type="term" value="F:ATP binding"/>
    <property type="evidence" value="ECO:0007669"/>
    <property type="project" value="UniProtKB-KW"/>
</dbReference>
<dbReference type="GO" id="GO:0050567">
    <property type="term" value="F:glutaminyl-tRNA synthase (glutamine-hydrolyzing) activity"/>
    <property type="evidence" value="ECO:0007669"/>
    <property type="project" value="UniProtKB-UniRule"/>
</dbReference>
<dbReference type="GO" id="GO:0070681">
    <property type="term" value="P:glutaminyl-tRNAGln biosynthesis via transamidation"/>
    <property type="evidence" value="ECO:0007669"/>
    <property type="project" value="TreeGrafter"/>
</dbReference>
<dbReference type="GO" id="GO:0006412">
    <property type="term" value="P:translation"/>
    <property type="evidence" value="ECO:0007669"/>
    <property type="project" value="UniProtKB-UniRule"/>
</dbReference>
<dbReference type="FunFam" id="1.10.10.410:FF:000001">
    <property type="entry name" value="Aspartyl/glutamyl-tRNA(Asn/Gln) amidotransferase subunit B"/>
    <property type="match status" value="1"/>
</dbReference>
<dbReference type="FunFam" id="1.10.150.380:FF:000001">
    <property type="entry name" value="Aspartyl/glutamyl-tRNA(Asn/Gln) amidotransferase subunit B"/>
    <property type="match status" value="1"/>
</dbReference>
<dbReference type="Gene3D" id="1.10.10.410">
    <property type="match status" value="1"/>
</dbReference>
<dbReference type="Gene3D" id="1.10.150.380">
    <property type="entry name" value="GatB domain, N-terminal subdomain"/>
    <property type="match status" value="1"/>
</dbReference>
<dbReference type="HAMAP" id="MF_00121">
    <property type="entry name" value="GatB"/>
    <property type="match status" value="1"/>
</dbReference>
<dbReference type="InterPro" id="IPR017959">
    <property type="entry name" value="Asn/Gln-tRNA_amidoTrfase_suB/E"/>
</dbReference>
<dbReference type="InterPro" id="IPR006075">
    <property type="entry name" value="Asn/Gln-tRNA_Trfase_suB/E_cat"/>
</dbReference>
<dbReference type="InterPro" id="IPR018027">
    <property type="entry name" value="Asn/Gln_amidotransferase"/>
</dbReference>
<dbReference type="InterPro" id="IPR003789">
    <property type="entry name" value="Asn/Gln_tRNA_amidoTrase-B-like"/>
</dbReference>
<dbReference type="InterPro" id="IPR004413">
    <property type="entry name" value="GatB"/>
</dbReference>
<dbReference type="InterPro" id="IPR042114">
    <property type="entry name" value="GatB_C_1"/>
</dbReference>
<dbReference type="InterPro" id="IPR023168">
    <property type="entry name" value="GatB_Yqey_C_2"/>
</dbReference>
<dbReference type="InterPro" id="IPR017958">
    <property type="entry name" value="Gln-tRNA_amidoTrfase_suB_CS"/>
</dbReference>
<dbReference type="InterPro" id="IPR014746">
    <property type="entry name" value="Gln_synth/guanido_kin_cat_dom"/>
</dbReference>
<dbReference type="NCBIfam" id="TIGR00133">
    <property type="entry name" value="gatB"/>
    <property type="match status" value="1"/>
</dbReference>
<dbReference type="NCBIfam" id="NF004011">
    <property type="entry name" value="PRK05477.1-1"/>
    <property type="match status" value="1"/>
</dbReference>
<dbReference type="NCBIfam" id="NF004012">
    <property type="entry name" value="PRK05477.1-2"/>
    <property type="match status" value="1"/>
</dbReference>
<dbReference type="NCBIfam" id="NF004014">
    <property type="entry name" value="PRK05477.1-4"/>
    <property type="match status" value="1"/>
</dbReference>
<dbReference type="PANTHER" id="PTHR11659">
    <property type="entry name" value="GLUTAMYL-TRNA GLN AMIDOTRANSFERASE SUBUNIT B MITOCHONDRIAL AND PROKARYOTIC PET112-RELATED"/>
    <property type="match status" value="1"/>
</dbReference>
<dbReference type="PANTHER" id="PTHR11659:SF0">
    <property type="entry name" value="GLUTAMYL-TRNA(GLN) AMIDOTRANSFERASE SUBUNIT B, MITOCHONDRIAL"/>
    <property type="match status" value="1"/>
</dbReference>
<dbReference type="Pfam" id="PF02934">
    <property type="entry name" value="GatB_N"/>
    <property type="match status" value="1"/>
</dbReference>
<dbReference type="Pfam" id="PF02637">
    <property type="entry name" value="GatB_Yqey"/>
    <property type="match status" value="1"/>
</dbReference>
<dbReference type="SMART" id="SM00845">
    <property type="entry name" value="GatB_Yqey"/>
    <property type="match status" value="1"/>
</dbReference>
<dbReference type="SUPFAM" id="SSF89095">
    <property type="entry name" value="GatB/YqeY motif"/>
    <property type="match status" value="1"/>
</dbReference>
<dbReference type="SUPFAM" id="SSF55931">
    <property type="entry name" value="Glutamine synthetase/guanido kinase"/>
    <property type="match status" value="1"/>
</dbReference>
<dbReference type="PROSITE" id="PS01234">
    <property type="entry name" value="GATB"/>
    <property type="match status" value="1"/>
</dbReference>
<evidence type="ECO:0000255" key="1">
    <source>
        <dbReference type="HAMAP-Rule" id="MF_00121"/>
    </source>
</evidence>
<name>GATB_SHOC1</name>
<gene>
    <name evidence="1" type="primary">gatB</name>
    <name type="ordered locus">ABC1098</name>
</gene>
<organism>
    <name type="scientific">Shouchella clausii (strain KSM-K16)</name>
    <name type="common">Alkalihalobacillus clausii</name>
    <dbReference type="NCBI Taxonomy" id="66692"/>
    <lineage>
        <taxon>Bacteria</taxon>
        <taxon>Bacillati</taxon>
        <taxon>Bacillota</taxon>
        <taxon>Bacilli</taxon>
        <taxon>Bacillales</taxon>
        <taxon>Bacillaceae</taxon>
        <taxon>Shouchella</taxon>
    </lineage>
</organism>
<proteinExistence type="inferred from homology"/>
<comment type="function">
    <text evidence="1">Allows the formation of correctly charged Asn-tRNA(Asn) or Gln-tRNA(Gln) through the transamidation of misacylated Asp-tRNA(Asn) or Glu-tRNA(Gln) in organisms which lack either or both of asparaginyl-tRNA or glutaminyl-tRNA synthetases. The reaction takes place in the presence of glutamine and ATP through an activated phospho-Asp-tRNA(Asn) or phospho-Glu-tRNA(Gln).</text>
</comment>
<comment type="catalytic activity">
    <reaction evidence="1">
        <text>L-glutamyl-tRNA(Gln) + L-glutamine + ATP + H2O = L-glutaminyl-tRNA(Gln) + L-glutamate + ADP + phosphate + H(+)</text>
        <dbReference type="Rhea" id="RHEA:17521"/>
        <dbReference type="Rhea" id="RHEA-COMP:9681"/>
        <dbReference type="Rhea" id="RHEA-COMP:9684"/>
        <dbReference type="ChEBI" id="CHEBI:15377"/>
        <dbReference type="ChEBI" id="CHEBI:15378"/>
        <dbReference type="ChEBI" id="CHEBI:29985"/>
        <dbReference type="ChEBI" id="CHEBI:30616"/>
        <dbReference type="ChEBI" id="CHEBI:43474"/>
        <dbReference type="ChEBI" id="CHEBI:58359"/>
        <dbReference type="ChEBI" id="CHEBI:78520"/>
        <dbReference type="ChEBI" id="CHEBI:78521"/>
        <dbReference type="ChEBI" id="CHEBI:456216"/>
    </reaction>
</comment>
<comment type="catalytic activity">
    <reaction evidence="1">
        <text>L-aspartyl-tRNA(Asn) + L-glutamine + ATP + H2O = L-asparaginyl-tRNA(Asn) + L-glutamate + ADP + phosphate + 2 H(+)</text>
        <dbReference type="Rhea" id="RHEA:14513"/>
        <dbReference type="Rhea" id="RHEA-COMP:9674"/>
        <dbReference type="Rhea" id="RHEA-COMP:9677"/>
        <dbReference type="ChEBI" id="CHEBI:15377"/>
        <dbReference type="ChEBI" id="CHEBI:15378"/>
        <dbReference type="ChEBI" id="CHEBI:29985"/>
        <dbReference type="ChEBI" id="CHEBI:30616"/>
        <dbReference type="ChEBI" id="CHEBI:43474"/>
        <dbReference type="ChEBI" id="CHEBI:58359"/>
        <dbReference type="ChEBI" id="CHEBI:78515"/>
        <dbReference type="ChEBI" id="CHEBI:78516"/>
        <dbReference type="ChEBI" id="CHEBI:456216"/>
    </reaction>
</comment>
<comment type="subunit">
    <text evidence="1">Heterotrimer of A, B and C subunits.</text>
</comment>
<comment type="similarity">
    <text evidence="1">Belongs to the GatB/GatE family. GatB subfamily.</text>
</comment>
<feature type="chain" id="PRO_0000241193" description="Aspartyl/glutamyl-tRNA(Asn/Gln) amidotransferase subunit B">
    <location>
        <begin position="1"/>
        <end position="476"/>
    </location>
</feature>
<keyword id="KW-0067">ATP-binding</keyword>
<keyword id="KW-0436">Ligase</keyword>
<keyword id="KW-0547">Nucleotide-binding</keyword>
<keyword id="KW-0648">Protein biosynthesis</keyword>
<keyword id="KW-1185">Reference proteome</keyword>
<sequence>MNFETIIGLEVHVELKTDSKIFSSSPNHFGAEPNTNTSVIDLGYPGVLPVLNKRAVDFAMKAAMALNCQIATDTKFDRKNYFYPDNPKAYQISQFDKPIGEHGWIEIEVGGKKKRIGITRLHLEEDAGKLTHGTDGHSLVDYNRQGTPLVEIVSEPDIRTPEEAYAYLEKLKAIIQYTGVSDCKMEEGSLRCDANISLRPIGQEAFGTKTELKNLNSFNFVRKGLEYEEKRQEQVLLSGGVIEQETRRYDEAGNKTILMRVKEGSDDYRYFPEPDLVNLYIDDNWKERVRSEIPELPDARKDRYVSELGLPAYDAHVLTLTKEMSDFFEETIREGADAKLASNWLMGEVLAYLNAEQKELQESALTPAGLAGMIKLITSGTISSKIAKKVFKELIENGGDPEQIVKDKGLVQISDEGELRKIVAEVLDANAQSIEDYKNGKDRALGFLVGQMMKATKGKANPQLVNKLLLEEMDKR</sequence>